<keyword id="KW-0002">3D-structure</keyword>
<keyword id="KW-0963">Cytoplasm</keyword>
<keyword id="KW-1017">Isopeptide bond</keyword>
<keyword id="KW-0539">Nucleus</keyword>
<keyword id="KW-0597">Phosphoprotein</keyword>
<keyword id="KW-1267">Proteomics identification</keyword>
<keyword id="KW-1185">Reference proteome</keyword>
<keyword id="KW-0694">RNA-binding</keyword>
<keyword id="KW-0698">rRNA processing</keyword>
<keyword id="KW-0832">Ubl conjugation</keyword>
<dbReference type="EMBL" id="X98263">
    <property type="protein sequence ID" value="CAA66916.1"/>
    <property type="molecule type" value="mRNA"/>
</dbReference>
<dbReference type="EMBL" id="AK314163">
    <property type="protein sequence ID" value="BAG36847.1"/>
    <property type="molecule type" value="mRNA"/>
</dbReference>
<dbReference type="EMBL" id="AC138304">
    <property type="status" value="NOT_ANNOTATED_CDS"/>
    <property type="molecule type" value="Genomic_DNA"/>
</dbReference>
<dbReference type="EMBL" id="BC005242">
    <property type="protein sequence ID" value="AAH05242.1"/>
    <property type="molecule type" value="mRNA"/>
</dbReference>
<dbReference type="EMBL" id="BC011020">
    <property type="protein sequence ID" value="AAH11020.1"/>
    <property type="molecule type" value="mRNA"/>
</dbReference>
<dbReference type="EMBL" id="BC031017">
    <property type="protein sequence ID" value="AAH31017.1"/>
    <property type="molecule type" value="mRNA"/>
</dbReference>
<dbReference type="CCDS" id="CCDS10937.1"/>
<dbReference type="RefSeq" id="NP_005783.2">
    <property type="nucleotide sequence ID" value="NM_005792.2"/>
</dbReference>
<dbReference type="PDB" id="6D6Q">
    <property type="method" value="EM"/>
    <property type="resolution" value="3.45 A"/>
    <property type="chains" value="L=1-160"/>
</dbReference>
<dbReference type="PDB" id="6D6R">
    <property type="method" value="EM"/>
    <property type="resolution" value="3.45 A"/>
    <property type="chains" value="L=1-160"/>
</dbReference>
<dbReference type="PDB" id="6H25">
    <property type="method" value="EM"/>
    <property type="resolution" value="3.80 A"/>
    <property type="chains" value="K=1-160"/>
</dbReference>
<dbReference type="PDBsum" id="6D6Q"/>
<dbReference type="PDBsum" id="6D6R"/>
<dbReference type="PDBsum" id="6H25"/>
<dbReference type="EMDB" id="EMD-0128"/>
<dbReference type="EMDB" id="EMD-14515"/>
<dbReference type="EMDB" id="EMD-7808"/>
<dbReference type="EMDB" id="EMD-7809"/>
<dbReference type="SMR" id="Q99547"/>
<dbReference type="BioGRID" id="115495">
    <property type="interactions" value="81"/>
</dbReference>
<dbReference type="CORUM" id="Q99547"/>
<dbReference type="DIP" id="DIP-31131N"/>
<dbReference type="FunCoup" id="Q99547">
    <property type="interactions" value="2788"/>
</dbReference>
<dbReference type="IntAct" id="Q99547">
    <property type="interactions" value="61"/>
</dbReference>
<dbReference type="MINT" id="Q99547"/>
<dbReference type="STRING" id="9606.ENSP00000258169"/>
<dbReference type="GlyGen" id="Q99547">
    <property type="glycosylation" value="1 site, 1 O-linked glycan (1 site)"/>
</dbReference>
<dbReference type="iPTMnet" id="Q99547"/>
<dbReference type="PhosphoSitePlus" id="Q99547"/>
<dbReference type="SwissPalm" id="Q99547"/>
<dbReference type="BioMuta" id="MPHOSPH6"/>
<dbReference type="DMDM" id="296438296"/>
<dbReference type="jPOST" id="Q99547"/>
<dbReference type="MassIVE" id="Q99547"/>
<dbReference type="PaxDb" id="9606-ENSP00000258169"/>
<dbReference type="PeptideAtlas" id="Q99547"/>
<dbReference type="ProteomicsDB" id="78320"/>
<dbReference type="Pumba" id="Q99547"/>
<dbReference type="Antibodypedia" id="3289">
    <property type="antibodies" value="173 antibodies from 26 providers"/>
</dbReference>
<dbReference type="DNASU" id="10200"/>
<dbReference type="Ensembl" id="ENST00000258169.9">
    <property type="protein sequence ID" value="ENSP00000258169.4"/>
    <property type="gene ID" value="ENSG00000135698.10"/>
</dbReference>
<dbReference type="GeneID" id="10200"/>
<dbReference type="KEGG" id="hsa:10200"/>
<dbReference type="MANE-Select" id="ENST00000258169.9">
    <property type="protein sequence ID" value="ENSP00000258169.4"/>
    <property type="RefSeq nucleotide sequence ID" value="NM_005792.2"/>
    <property type="RefSeq protein sequence ID" value="NP_005783.2"/>
</dbReference>
<dbReference type="UCSC" id="uc002fgw.4">
    <property type="organism name" value="human"/>
</dbReference>
<dbReference type="AGR" id="HGNC:7214"/>
<dbReference type="CTD" id="10200"/>
<dbReference type="DisGeNET" id="10200"/>
<dbReference type="GeneCards" id="MPHOSPH6"/>
<dbReference type="HGNC" id="HGNC:7214">
    <property type="gene designation" value="MPHOSPH6"/>
</dbReference>
<dbReference type="HPA" id="ENSG00000135698">
    <property type="expression patterns" value="Low tissue specificity"/>
</dbReference>
<dbReference type="MIM" id="605500">
    <property type="type" value="gene"/>
</dbReference>
<dbReference type="neXtProt" id="NX_Q99547"/>
<dbReference type="OpenTargets" id="ENSG00000135698"/>
<dbReference type="PharmGKB" id="PA30920"/>
<dbReference type="VEuPathDB" id="HostDB:ENSG00000135698"/>
<dbReference type="eggNOG" id="KOG4531">
    <property type="taxonomic scope" value="Eukaryota"/>
</dbReference>
<dbReference type="GeneTree" id="ENSGT00390000009212"/>
<dbReference type="InParanoid" id="Q99547"/>
<dbReference type="OMA" id="GSMKKKF"/>
<dbReference type="OrthoDB" id="20403at2759"/>
<dbReference type="PAN-GO" id="Q99547">
    <property type="GO annotations" value="1 GO annotation based on evolutionary models"/>
</dbReference>
<dbReference type="PhylomeDB" id="Q99547"/>
<dbReference type="TreeFam" id="TF323810"/>
<dbReference type="PathwayCommons" id="Q99547"/>
<dbReference type="Reactome" id="R-HSA-6791226">
    <property type="pathway name" value="Major pathway of rRNA processing in the nucleolus and cytosol"/>
</dbReference>
<dbReference type="SignaLink" id="Q99547"/>
<dbReference type="BioGRID-ORCS" id="10200">
    <property type="hits" value="141 hits in 1155 CRISPR screens"/>
</dbReference>
<dbReference type="CD-CODE" id="91857CE7">
    <property type="entry name" value="Nucleolus"/>
</dbReference>
<dbReference type="ChiTaRS" id="MPHOSPH6">
    <property type="organism name" value="human"/>
</dbReference>
<dbReference type="GeneWiki" id="MPHOSPH6"/>
<dbReference type="GenomeRNAi" id="10200"/>
<dbReference type="Pharos" id="Q99547">
    <property type="development level" value="Tbio"/>
</dbReference>
<dbReference type="PRO" id="PR:Q99547"/>
<dbReference type="Proteomes" id="UP000005640">
    <property type="component" value="Chromosome 16"/>
</dbReference>
<dbReference type="RNAct" id="Q99547">
    <property type="molecule type" value="protein"/>
</dbReference>
<dbReference type="Bgee" id="ENSG00000135698">
    <property type="expression patterns" value="Expressed in oocyte and 205 other cell types or tissues"/>
</dbReference>
<dbReference type="ExpressionAtlas" id="Q99547">
    <property type="expression patterns" value="baseline and differential"/>
</dbReference>
<dbReference type="GO" id="GO:0005829">
    <property type="term" value="C:cytosol"/>
    <property type="evidence" value="ECO:0000314"/>
    <property type="project" value="HPA"/>
</dbReference>
<dbReference type="GO" id="GO:0000178">
    <property type="term" value="C:exosome (RNase complex)"/>
    <property type="evidence" value="ECO:0000314"/>
    <property type="project" value="UniProtKB"/>
</dbReference>
<dbReference type="GO" id="GO:0005730">
    <property type="term" value="C:nucleolus"/>
    <property type="evidence" value="ECO:0000314"/>
    <property type="project" value="HPA"/>
</dbReference>
<dbReference type="GO" id="GO:0005654">
    <property type="term" value="C:nucleoplasm"/>
    <property type="evidence" value="ECO:0000314"/>
    <property type="project" value="HPA"/>
</dbReference>
<dbReference type="GO" id="GO:0005634">
    <property type="term" value="C:nucleus"/>
    <property type="evidence" value="ECO:0000314"/>
    <property type="project" value="UniProtKB"/>
</dbReference>
<dbReference type="GO" id="GO:0003723">
    <property type="term" value="F:RNA binding"/>
    <property type="evidence" value="ECO:0007669"/>
    <property type="project" value="UniProtKB-KW"/>
</dbReference>
<dbReference type="GO" id="GO:0000460">
    <property type="term" value="P:maturation of 5.8S rRNA"/>
    <property type="evidence" value="ECO:0000315"/>
    <property type="project" value="UniProtKB"/>
</dbReference>
<dbReference type="InterPro" id="IPR019324">
    <property type="entry name" value="MPP6"/>
</dbReference>
<dbReference type="PANTHER" id="PTHR13582">
    <property type="entry name" value="M-PHASE PHOSPHOPROTEIN 6"/>
    <property type="match status" value="1"/>
</dbReference>
<dbReference type="PANTHER" id="PTHR13582:SF0">
    <property type="entry name" value="M-PHASE PHOSPHOPROTEIN 6"/>
    <property type="match status" value="1"/>
</dbReference>
<dbReference type="Pfam" id="PF10175">
    <property type="entry name" value="MPP6"/>
    <property type="match status" value="1"/>
</dbReference>
<sequence length="160" mass="19024">MAAERKTRLSKNLLRMKFMQRGLDSETKKQLEEEEKKIISEEHWYLDLPELKEKESFIIEEQSFLLCEDLLYGRMSFRGFNPEVEKLMLQMNAKHKAEEVEDETVELDVSDEEMARRYETLVGTIGKKFARKRDHANYEEDENGDITPIKAKKMFLKPQD</sequence>
<proteinExistence type="evidence at protein level"/>
<comment type="function">
    <text evidence="3 4">RNA-binding protein that associates with the RNA exosome complex. Involved in the 3'-processing of the 7S pre-RNA to the mature 5.8S rRNA and play a role in recruiting the RNA exosome complex to pre-rRNA; this function may include C1D.</text>
</comment>
<comment type="subunit">
    <text evidence="2 3 5 6">Associates with the RNA exosome complex, mediated by EXOSC3 (PubMed:15231747, PubMed:29906447, PubMed:30047866). Interacts with ARHGAP18 (PubMed:15231747). Interacts with exosome cofactors EXOSC10 and MTREX (PubMed:17412707, PubMed:29906447).</text>
</comment>
<comment type="interaction">
    <interactant intactId="EBI-373187">
        <id>Q99547</id>
    </interactant>
    <interactant intactId="EBI-77613">
        <id>P05067</id>
        <label>APP</label>
    </interactant>
    <organismsDiffer>false</organismsDiffer>
    <experiments>3</experiments>
</comment>
<comment type="interaction">
    <interactant intactId="EBI-373187">
        <id>Q99547</id>
    </interactant>
    <interactant intactId="EBI-358236">
        <id>Q01780</id>
        <label>EXOSC10</label>
    </interactant>
    <organismsDiffer>false</organismsDiffer>
    <experiments>7</experiments>
</comment>
<comment type="interaction">
    <interactant intactId="EBI-373187">
        <id>Q99547</id>
    </interactant>
    <interactant intactId="EBI-301735">
        <id>Q13868</id>
        <label>EXOSC2</label>
    </interactant>
    <organismsDiffer>false</organismsDiffer>
    <experiments>6</experiments>
</comment>
<comment type="interaction">
    <interactant intactId="EBI-373187">
        <id>Q99547</id>
    </interactant>
    <interactant intactId="EBI-347612">
        <id>P42285</id>
        <label>MTREX</label>
    </interactant>
    <organismsDiffer>false</organismsDiffer>
    <experiments>3</experiments>
</comment>
<comment type="subcellular location">
    <subcellularLocation>
        <location>Nucleus</location>
        <location>Nucleolus</location>
    </subcellularLocation>
    <subcellularLocation>
        <location>Cytoplasm</location>
    </subcellularLocation>
    <text>Cytoplasmic in M phase.</text>
</comment>
<comment type="PTM">
    <text>Phosphorylated in M (mitotic) phase.</text>
</comment>
<comment type="similarity">
    <text evidence="8">Belongs to the MPP6 family.</text>
</comment>
<feature type="chain" id="PRO_0000122437" description="M-phase phosphoprotein 6">
    <location>
        <begin position="1"/>
        <end position="160"/>
    </location>
</feature>
<feature type="short sequence motif" description="Nuclear localization signal" evidence="1">
    <location>
        <begin position="116"/>
        <end position="133"/>
    </location>
</feature>
<feature type="modified residue" description="Phosphoserine" evidence="16 18">
    <location>
        <position position="110"/>
    </location>
</feature>
<feature type="modified residue" description="Phosphothreonine" evidence="13 14 15 16 17 18">
    <location>
        <position position="147"/>
    </location>
</feature>
<feature type="cross-link" description="Glycyl lysine isopeptide (Lys-Gly) (interchain with G-Cter in SUMO2)" evidence="20">
    <location>
        <position position="37"/>
    </location>
</feature>
<feature type="cross-link" description="Glycyl lysine isopeptide (Lys-Gly) (interchain with G-Cter in SUMO2)" evidence="20">
    <location>
        <position position="86"/>
    </location>
</feature>
<feature type="cross-link" description="Glycyl lysine isopeptide (Lys-Gly) (interchain with G-Cter in SUMO2)" evidence="20">
    <location>
        <position position="127"/>
    </location>
</feature>
<feature type="cross-link" description="Glycyl lysine isopeptide (Lys-Gly) (interchain with G-Cter in SUMO2)" evidence="20">
    <location>
        <position position="150"/>
    </location>
</feature>
<feature type="cross-link" description="Glycyl lysine isopeptide (Lys-Gly) (interchain with G-Cter in SUMO2)" evidence="19">
    <location>
        <position position="153"/>
    </location>
</feature>
<feature type="sequence variant" id="VAR_056150" description="In dbSNP:rs2303267.">
    <original>I</original>
    <variation>V</variation>
    <location>
        <position position="58"/>
    </location>
</feature>
<feature type="sequence conflict" description="In Ref. 1; CAA66916, 2; BAG36847 and 4; AAH05242/AAH11020/AAH31017." evidence="8" ref="1 2 4">
    <original>R</original>
    <variation>K</variation>
    <location>
        <position position="8"/>
    </location>
</feature>
<feature type="helix" evidence="21">
    <location>
        <begin position="11"/>
        <end position="14"/>
    </location>
</feature>
<feature type="helix" evidence="21">
    <location>
        <begin position="17"/>
        <end position="20"/>
    </location>
</feature>
<feature type="turn" evidence="21">
    <location>
        <begin position="49"/>
        <end position="51"/>
    </location>
</feature>
<feature type="strand" evidence="21">
    <location>
        <begin position="57"/>
        <end position="60"/>
    </location>
</feature>
<feature type="helix" evidence="21">
    <location>
        <begin position="64"/>
        <end position="67"/>
    </location>
</feature>
<feature type="strand" evidence="21">
    <location>
        <begin position="73"/>
        <end position="77"/>
    </location>
</feature>
<feature type="helix" evidence="21">
    <location>
        <begin position="82"/>
        <end position="91"/>
    </location>
</feature>
<evidence type="ECO:0000255" key="1"/>
<evidence type="ECO:0000269" key="2">
    <source>
    </source>
</evidence>
<evidence type="ECO:0000269" key="3">
    <source>
    </source>
</evidence>
<evidence type="ECO:0000269" key="4">
    <source>
    </source>
</evidence>
<evidence type="ECO:0000269" key="5">
    <source>
    </source>
</evidence>
<evidence type="ECO:0000269" key="6">
    <source>
    </source>
</evidence>
<evidence type="ECO:0000303" key="7">
    <source>
    </source>
</evidence>
<evidence type="ECO:0000305" key="8"/>
<evidence type="ECO:0000312" key="9">
    <source>
        <dbReference type="HGNC" id="HGNC:7214"/>
    </source>
</evidence>
<evidence type="ECO:0007744" key="10">
    <source>
        <dbReference type="PDB" id="6D6Q"/>
    </source>
</evidence>
<evidence type="ECO:0007744" key="11">
    <source>
        <dbReference type="PDB" id="6D6R"/>
    </source>
</evidence>
<evidence type="ECO:0007744" key="12">
    <source>
        <dbReference type="PDB" id="6H25"/>
    </source>
</evidence>
<evidence type="ECO:0007744" key="13">
    <source>
    </source>
</evidence>
<evidence type="ECO:0007744" key="14">
    <source>
    </source>
</evidence>
<evidence type="ECO:0007744" key="15">
    <source>
    </source>
</evidence>
<evidence type="ECO:0007744" key="16">
    <source>
    </source>
</evidence>
<evidence type="ECO:0007744" key="17">
    <source>
    </source>
</evidence>
<evidence type="ECO:0007744" key="18">
    <source>
    </source>
</evidence>
<evidence type="ECO:0007744" key="19">
    <source>
    </source>
</evidence>
<evidence type="ECO:0007744" key="20">
    <source>
    </source>
</evidence>
<evidence type="ECO:0007829" key="21">
    <source>
        <dbReference type="PDB" id="6D6Q"/>
    </source>
</evidence>
<organism>
    <name type="scientific">Homo sapiens</name>
    <name type="common">Human</name>
    <dbReference type="NCBI Taxonomy" id="9606"/>
    <lineage>
        <taxon>Eukaryota</taxon>
        <taxon>Metazoa</taxon>
        <taxon>Chordata</taxon>
        <taxon>Craniata</taxon>
        <taxon>Vertebrata</taxon>
        <taxon>Euteleostomi</taxon>
        <taxon>Mammalia</taxon>
        <taxon>Eutheria</taxon>
        <taxon>Euarchontoglires</taxon>
        <taxon>Primates</taxon>
        <taxon>Haplorrhini</taxon>
        <taxon>Catarrhini</taxon>
        <taxon>Hominidae</taxon>
        <taxon>Homo</taxon>
    </lineage>
</organism>
<gene>
    <name evidence="9" type="primary">MPHOSPH6</name>
    <name evidence="7" type="synonym">MPP6</name>
</gene>
<name>MPH6_HUMAN</name>
<reference key="1">
    <citation type="journal article" date="1996" name="Mol. Biol. Cell">
        <title>Identification of novel M phase phosphoproteins by expression cloning.</title>
        <authorList>
            <person name="Matsumoto-Taniura N."/>
            <person name="Pirollet F."/>
            <person name="Monroe R."/>
            <person name="Gerace L."/>
            <person name="Westendorf J.M."/>
        </authorList>
    </citation>
    <scope>NUCLEOTIDE SEQUENCE [MRNA]</scope>
    <source>
        <tissue>Lymphoblast</tissue>
    </source>
</reference>
<reference key="2">
    <citation type="journal article" date="2004" name="Nat. Genet.">
        <title>Complete sequencing and characterization of 21,243 full-length human cDNAs.</title>
        <authorList>
            <person name="Ota T."/>
            <person name="Suzuki Y."/>
            <person name="Nishikawa T."/>
            <person name="Otsuki T."/>
            <person name="Sugiyama T."/>
            <person name="Irie R."/>
            <person name="Wakamatsu A."/>
            <person name="Hayashi K."/>
            <person name="Sato H."/>
            <person name="Nagai K."/>
            <person name="Kimura K."/>
            <person name="Makita H."/>
            <person name="Sekine M."/>
            <person name="Obayashi M."/>
            <person name="Nishi T."/>
            <person name="Shibahara T."/>
            <person name="Tanaka T."/>
            <person name="Ishii S."/>
            <person name="Yamamoto J."/>
            <person name="Saito K."/>
            <person name="Kawai Y."/>
            <person name="Isono Y."/>
            <person name="Nakamura Y."/>
            <person name="Nagahari K."/>
            <person name="Murakami K."/>
            <person name="Yasuda T."/>
            <person name="Iwayanagi T."/>
            <person name="Wagatsuma M."/>
            <person name="Shiratori A."/>
            <person name="Sudo H."/>
            <person name="Hosoiri T."/>
            <person name="Kaku Y."/>
            <person name="Kodaira H."/>
            <person name="Kondo H."/>
            <person name="Sugawara M."/>
            <person name="Takahashi M."/>
            <person name="Kanda K."/>
            <person name="Yokoi T."/>
            <person name="Furuya T."/>
            <person name="Kikkawa E."/>
            <person name="Omura Y."/>
            <person name="Abe K."/>
            <person name="Kamihara K."/>
            <person name="Katsuta N."/>
            <person name="Sato K."/>
            <person name="Tanikawa M."/>
            <person name="Yamazaki M."/>
            <person name="Ninomiya K."/>
            <person name="Ishibashi T."/>
            <person name="Yamashita H."/>
            <person name="Murakawa K."/>
            <person name="Fujimori K."/>
            <person name="Tanai H."/>
            <person name="Kimata M."/>
            <person name="Watanabe M."/>
            <person name="Hiraoka S."/>
            <person name="Chiba Y."/>
            <person name="Ishida S."/>
            <person name="Ono Y."/>
            <person name="Takiguchi S."/>
            <person name="Watanabe S."/>
            <person name="Yosida M."/>
            <person name="Hotuta T."/>
            <person name="Kusano J."/>
            <person name="Kanehori K."/>
            <person name="Takahashi-Fujii A."/>
            <person name="Hara H."/>
            <person name="Tanase T.-O."/>
            <person name="Nomura Y."/>
            <person name="Togiya S."/>
            <person name="Komai F."/>
            <person name="Hara R."/>
            <person name="Takeuchi K."/>
            <person name="Arita M."/>
            <person name="Imose N."/>
            <person name="Musashino K."/>
            <person name="Yuuki H."/>
            <person name="Oshima A."/>
            <person name="Sasaki N."/>
            <person name="Aotsuka S."/>
            <person name="Yoshikawa Y."/>
            <person name="Matsunawa H."/>
            <person name="Ichihara T."/>
            <person name="Shiohata N."/>
            <person name="Sano S."/>
            <person name="Moriya S."/>
            <person name="Momiyama H."/>
            <person name="Satoh N."/>
            <person name="Takami S."/>
            <person name="Terashima Y."/>
            <person name="Suzuki O."/>
            <person name="Nakagawa S."/>
            <person name="Senoh A."/>
            <person name="Mizoguchi H."/>
            <person name="Goto Y."/>
            <person name="Shimizu F."/>
            <person name="Wakebe H."/>
            <person name="Hishigaki H."/>
            <person name="Watanabe T."/>
            <person name="Sugiyama A."/>
            <person name="Takemoto M."/>
            <person name="Kawakami B."/>
            <person name="Yamazaki M."/>
            <person name="Watanabe K."/>
            <person name="Kumagai A."/>
            <person name="Itakura S."/>
            <person name="Fukuzumi Y."/>
            <person name="Fujimori Y."/>
            <person name="Komiyama M."/>
            <person name="Tashiro H."/>
            <person name="Tanigami A."/>
            <person name="Fujiwara T."/>
            <person name="Ono T."/>
            <person name="Yamada K."/>
            <person name="Fujii Y."/>
            <person name="Ozaki K."/>
            <person name="Hirao M."/>
            <person name="Ohmori Y."/>
            <person name="Kawabata A."/>
            <person name="Hikiji T."/>
            <person name="Kobatake N."/>
            <person name="Inagaki H."/>
            <person name="Ikema Y."/>
            <person name="Okamoto S."/>
            <person name="Okitani R."/>
            <person name="Kawakami T."/>
            <person name="Noguchi S."/>
            <person name="Itoh T."/>
            <person name="Shigeta K."/>
            <person name="Senba T."/>
            <person name="Matsumura K."/>
            <person name="Nakajima Y."/>
            <person name="Mizuno T."/>
            <person name="Morinaga M."/>
            <person name="Sasaki M."/>
            <person name="Togashi T."/>
            <person name="Oyama M."/>
            <person name="Hata H."/>
            <person name="Watanabe M."/>
            <person name="Komatsu T."/>
            <person name="Mizushima-Sugano J."/>
            <person name="Satoh T."/>
            <person name="Shirai Y."/>
            <person name="Takahashi Y."/>
            <person name="Nakagawa K."/>
            <person name="Okumura K."/>
            <person name="Nagase T."/>
            <person name="Nomura N."/>
            <person name="Kikuchi H."/>
            <person name="Masuho Y."/>
            <person name="Yamashita R."/>
            <person name="Nakai K."/>
            <person name="Yada T."/>
            <person name="Nakamura Y."/>
            <person name="Ohara O."/>
            <person name="Isogai T."/>
            <person name="Sugano S."/>
        </authorList>
    </citation>
    <scope>NUCLEOTIDE SEQUENCE [LARGE SCALE MRNA]</scope>
    <source>
        <tissue>Skeletal muscle</tissue>
    </source>
</reference>
<reference key="3">
    <citation type="journal article" date="2004" name="Nature">
        <title>The sequence and analysis of duplication-rich human chromosome 16.</title>
        <authorList>
            <person name="Martin J."/>
            <person name="Han C."/>
            <person name="Gordon L.A."/>
            <person name="Terry A."/>
            <person name="Prabhakar S."/>
            <person name="She X."/>
            <person name="Xie G."/>
            <person name="Hellsten U."/>
            <person name="Chan Y.M."/>
            <person name="Altherr M."/>
            <person name="Couronne O."/>
            <person name="Aerts A."/>
            <person name="Bajorek E."/>
            <person name="Black S."/>
            <person name="Blumer H."/>
            <person name="Branscomb E."/>
            <person name="Brown N.C."/>
            <person name="Bruno W.J."/>
            <person name="Buckingham J.M."/>
            <person name="Callen D.F."/>
            <person name="Campbell C.S."/>
            <person name="Campbell M.L."/>
            <person name="Campbell E.W."/>
            <person name="Caoile C."/>
            <person name="Challacombe J.F."/>
            <person name="Chasteen L.A."/>
            <person name="Chertkov O."/>
            <person name="Chi H.C."/>
            <person name="Christensen M."/>
            <person name="Clark L.M."/>
            <person name="Cohn J.D."/>
            <person name="Denys M."/>
            <person name="Detter J.C."/>
            <person name="Dickson M."/>
            <person name="Dimitrijevic-Bussod M."/>
            <person name="Escobar J."/>
            <person name="Fawcett J.J."/>
            <person name="Flowers D."/>
            <person name="Fotopulos D."/>
            <person name="Glavina T."/>
            <person name="Gomez M."/>
            <person name="Gonzales E."/>
            <person name="Goodstein D."/>
            <person name="Goodwin L.A."/>
            <person name="Grady D.L."/>
            <person name="Grigoriev I."/>
            <person name="Groza M."/>
            <person name="Hammon N."/>
            <person name="Hawkins T."/>
            <person name="Haydu L."/>
            <person name="Hildebrand C.E."/>
            <person name="Huang W."/>
            <person name="Israni S."/>
            <person name="Jett J."/>
            <person name="Jewett P.B."/>
            <person name="Kadner K."/>
            <person name="Kimball H."/>
            <person name="Kobayashi A."/>
            <person name="Krawczyk M.-C."/>
            <person name="Leyba T."/>
            <person name="Longmire J.L."/>
            <person name="Lopez F."/>
            <person name="Lou Y."/>
            <person name="Lowry S."/>
            <person name="Ludeman T."/>
            <person name="Manohar C.F."/>
            <person name="Mark G.A."/>
            <person name="McMurray K.L."/>
            <person name="Meincke L.J."/>
            <person name="Morgan J."/>
            <person name="Moyzis R.K."/>
            <person name="Mundt M.O."/>
            <person name="Munk A.C."/>
            <person name="Nandkeshwar R.D."/>
            <person name="Pitluck S."/>
            <person name="Pollard M."/>
            <person name="Predki P."/>
            <person name="Parson-Quintana B."/>
            <person name="Ramirez L."/>
            <person name="Rash S."/>
            <person name="Retterer J."/>
            <person name="Ricke D.O."/>
            <person name="Robinson D.L."/>
            <person name="Rodriguez A."/>
            <person name="Salamov A."/>
            <person name="Saunders E.H."/>
            <person name="Scott D."/>
            <person name="Shough T."/>
            <person name="Stallings R.L."/>
            <person name="Stalvey M."/>
            <person name="Sutherland R.D."/>
            <person name="Tapia R."/>
            <person name="Tesmer J.G."/>
            <person name="Thayer N."/>
            <person name="Thompson L.S."/>
            <person name="Tice H."/>
            <person name="Torney D.C."/>
            <person name="Tran-Gyamfi M."/>
            <person name="Tsai M."/>
            <person name="Ulanovsky L.E."/>
            <person name="Ustaszewska A."/>
            <person name="Vo N."/>
            <person name="White P.S."/>
            <person name="Williams A.L."/>
            <person name="Wills P.L."/>
            <person name="Wu J.-R."/>
            <person name="Wu K."/>
            <person name="Yang J."/>
            <person name="DeJong P."/>
            <person name="Bruce D."/>
            <person name="Doggett N.A."/>
            <person name="Deaven L."/>
            <person name="Schmutz J."/>
            <person name="Grimwood J."/>
            <person name="Richardson P."/>
            <person name="Rokhsar D.S."/>
            <person name="Eichler E.E."/>
            <person name="Gilna P."/>
            <person name="Lucas S.M."/>
            <person name="Myers R.M."/>
            <person name="Rubin E.M."/>
            <person name="Pennacchio L.A."/>
        </authorList>
    </citation>
    <scope>NUCLEOTIDE SEQUENCE [LARGE SCALE GENOMIC DNA]</scope>
</reference>
<reference key="4">
    <citation type="journal article" date="2004" name="Genome Res.">
        <title>The status, quality, and expansion of the NIH full-length cDNA project: the Mammalian Gene Collection (MGC).</title>
        <authorList>
            <consortium name="The MGC Project Team"/>
        </authorList>
    </citation>
    <scope>NUCLEOTIDE SEQUENCE [LARGE SCALE MRNA]</scope>
    <source>
        <tissue>Brain</tissue>
        <tissue>Lung</tissue>
        <tissue>Urinary bladder</tissue>
    </source>
</reference>
<reference key="5">
    <citation type="journal article" date="2001" name="Cell">
        <title>AU binding proteins recruit the exosome to degrade ARE-containing mRNAs.</title>
        <authorList>
            <person name="Chen C.-Y."/>
            <person name="Gherzi R."/>
            <person name="Ong S.-E."/>
            <person name="Chan E.L."/>
            <person name="Raijmakers R."/>
            <person name="Pruijn G.J.M."/>
            <person name="Stoecklin G."/>
            <person name="Moroni C."/>
            <person name="Mann M."/>
            <person name="Karin M."/>
        </authorList>
    </citation>
    <scope>ASSOCIATION WITH THE RNA EXOSOME COMPLEX</scope>
    <scope>IDENTIFICATION BY MASS SPECTROMETRY</scope>
</reference>
<reference key="6">
    <citation type="journal article" date="2004" name="Genome Res.">
        <title>A protein interaction framework for human mRNA degradation.</title>
        <authorList>
            <person name="Lehner B."/>
            <person name="Sanderson C.M."/>
        </authorList>
    </citation>
    <scope>INTERACTION WITH ARHGAP18</scope>
</reference>
<reference key="7">
    <citation type="journal article" date="2005" name="Nucleic Acids Res.">
        <title>MPP6 is an exosome-associated RNA-binding protein involved in 5.8S rRNA maturation.</title>
        <authorList>
            <person name="Schilders G."/>
            <person name="Raijmakers R."/>
            <person name="Raats J.M."/>
            <person name="Pruijn G.J."/>
        </authorList>
    </citation>
    <scope>ASSOCIATION WITH THE RNA EXOSOME COMPLEX</scope>
    <scope>RNA-BINDING</scope>
    <scope>SUBCELLULAR LOCATION</scope>
</reference>
<reference key="8">
    <citation type="journal article" date="2006" name="Cell">
        <title>Global, in vivo, and site-specific phosphorylation dynamics in signaling networks.</title>
        <authorList>
            <person name="Olsen J.V."/>
            <person name="Blagoev B."/>
            <person name="Gnad F."/>
            <person name="Macek B."/>
            <person name="Kumar C."/>
            <person name="Mortensen P."/>
            <person name="Mann M."/>
        </authorList>
    </citation>
    <scope>PHOSPHORYLATION [LARGE SCALE ANALYSIS] AT THR-147</scope>
    <scope>IDENTIFICATION BY MASS SPECTROMETRY [LARGE SCALE ANALYSIS]</scope>
    <source>
        <tissue>Cervix carcinoma</tissue>
    </source>
</reference>
<reference key="9">
    <citation type="journal article" date="2007" name="Nucleic Acids Res.">
        <title>C1D and hMtr4p associate with the human exosome subunit PM/Scl-100 and are involved in pre-rRNA processing.</title>
        <authorList>
            <person name="Schilders G."/>
            <person name="van Dijk E."/>
            <person name="Pruijn G.J.M."/>
        </authorList>
    </citation>
    <scope>FUNCTION</scope>
    <scope>SUBCELLULAR LOCATION</scope>
    <scope>INTERACTION WITH EXOSC10 AND MTREX</scope>
</reference>
<reference key="10">
    <citation type="journal article" date="2008" name="Mol. Cell">
        <title>Kinase-selective enrichment enables quantitative phosphoproteomics of the kinome across the cell cycle.</title>
        <authorList>
            <person name="Daub H."/>
            <person name="Olsen J.V."/>
            <person name="Bairlein M."/>
            <person name="Gnad F."/>
            <person name="Oppermann F.S."/>
            <person name="Korner R."/>
            <person name="Greff Z."/>
            <person name="Keri G."/>
            <person name="Stemmann O."/>
            <person name="Mann M."/>
        </authorList>
    </citation>
    <scope>PHOSPHORYLATION [LARGE SCALE ANALYSIS] AT THR-147</scope>
    <scope>IDENTIFICATION BY MASS SPECTROMETRY [LARGE SCALE ANALYSIS]</scope>
    <source>
        <tissue>Cervix carcinoma</tissue>
    </source>
</reference>
<reference key="11">
    <citation type="journal article" date="2008" name="Proc. Natl. Acad. Sci. U.S.A.">
        <title>A quantitative atlas of mitotic phosphorylation.</title>
        <authorList>
            <person name="Dephoure N."/>
            <person name="Zhou C."/>
            <person name="Villen J."/>
            <person name="Beausoleil S.A."/>
            <person name="Bakalarski C.E."/>
            <person name="Elledge S.J."/>
            <person name="Gygi S.P."/>
        </authorList>
    </citation>
    <scope>PHOSPHORYLATION [LARGE SCALE ANALYSIS] AT THR-147</scope>
    <scope>IDENTIFICATION BY MASS SPECTROMETRY [LARGE SCALE ANALYSIS]</scope>
    <source>
        <tissue>Cervix carcinoma</tissue>
    </source>
</reference>
<reference key="12">
    <citation type="journal article" date="2009" name="Sci. Signal.">
        <title>Quantitative phosphoproteomic analysis of T cell receptor signaling reveals system-wide modulation of protein-protein interactions.</title>
        <authorList>
            <person name="Mayya V."/>
            <person name="Lundgren D.H."/>
            <person name="Hwang S.-I."/>
            <person name="Rezaul K."/>
            <person name="Wu L."/>
            <person name="Eng J.K."/>
            <person name="Rodionov V."/>
            <person name="Han D.K."/>
        </authorList>
    </citation>
    <scope>PHOSPHORYLATION [LARGE SCALE ANALYSIS] AT SER-110 AND THR-147</scope>
    <scope>IDENTIFICATION BY MASS SPECTROMETRY [LARGE SCALE ANALYSIS]</scope>
    <source>
        <tissue>Leukemic T-cell</tissue>
    </source>
</reference>
<reference key="13">
    <citation type="journal article" date="2010" name="EMBO J.">
        <title>The human core exosome interacts with differentially localized processive RNases: hDIS3 and hDIS3L.</title>
        <authorList>
            <person name="Tomecki R."/>
            <person name="Kristiansen M.S."/>
            <person name="Lykke-Andersen S."/>
            <person name="Chlebowski A."/>
            <person name="Larsen K.M."/>
            <person name="Szczesny R.J."/>
            <person name="Drazkowska K."/>
            <person name="Pastula A."/>
            <person name="Andersen J.S."/>
            <person name="Stepien P.P."/>
            <person name="Dziembowski A."/>
            <person name="Jensen T.H."/>
        </authorList>
    </citation>
    <scope>ASSOCIATION WITH THE RNA EXOSOME COMPLEX</scope>
    <scope>SUBCELLULAR LOCATION</scope>
</reference>
<reference key="14">
    <citation type="journal article" date="2010" name="EMBO J.">
        <title>Dis3-like 1: a novel exoribonuclease associated with the human exosome.</title>
        <authorList>
            <person name="Staals R.H."/>
            <person name="Bronkhorst A.W."/>
            <person name="Schilders G."/>
            <person name="Slomovic S."/>
            <person name="Schuster G."/>
            <person name="Heck A.J."/>
            <person name="Raijmakers R."/>
            <person name="Pruijn G.J."/>
        </authorList>
    </citation>
    <scope>ASSOCIATION WITH THE RNA EXOSOME COMPLEX</scope>
    <scope>IDENTIFICATION BY MASS SPECTROMETRY</scope>
</reference>
<reference key="15">
    <citation type="journal article" date="2010" name="Sci. Signal.">
        <title>Quantitative phosphoproteomics reveals widespread full phosphorylation site occupancy during mitosis.</title>
        <authorList>
            <person name="Olsen J.V."/>
            <person name="Vermeulen M."/>
            <person name="Santamaria A."/>
            <person name="Kumar C."/>
            <person name="Miller M.L."/>
            <person name="Jensen L.J."/>
            <person name="Gnad F."/>
            <person name="Cox J."/>
            <person name="Jensen T.S."/>
            <person name="Nigg E.A."/>
            <person name="Brunak S."/>
            <person name="Mann M."/>
        </authorList>
    </citation>
    <scope>PHOSPHORYLATION [LARGE SCALE ANALYSIS] AT THR-147</scope>
    <scope>IDENTIFICATION BY MASS SPECTROMETRY [LARGE SCALE ANALYSIS]</scope>
    <source>
        <tissue>Cervix carcinoma</tissue>
    </source>
</reference>
<reference key="16">
    <citation type="journal article" date="2011" name="BMC Syst. Biol.">
        <title>Initial characterization of the human central proteome.</title>
        <authorList>
            <person name="Burkard T.R."/>
            <person name="Planyavsky M."/>
            <person name="Kaupe I."/>
            <person name="Breitwieser F.P."/>
            <person name="Buerckstuemmer T."/>
            <person name="Bennett K.L."/>
            <person name="Superti-Furga G."/>
            <person name="Colinge J."/>
        </authorList>
    </citation>
    <scope>IDENTIFICATION BY MASS SPECTROMETRY [LARGE SCALE ANALYSIS]</scope>
</reference>
<reference key="17">
    <citation type="journal article" date="2013" name="J. Proteome Res.">
        <title>Toward a comprehensive characterization of a human cancer cell phosphoproteome.</title>
        <authorList>
            <person name="Zhou H."/>
            <person name="Di Palma S."/>
            <person name="Preisinger C."/>
            <person name="Peng M."/>
            <person name="Polat A.N."/>
            <person name="Heck A.J."/>
            <person name="Mohammed S."/>
        </authorList>
    </citation>
    <scope>PHOSPHORYLATION [LARGE SCALE ANALYSIS] AT SER-110 AND THR-147</scope>
    <scope>IDENTIFICATION BY MASS SPECTROMETRY [LARGE SCALE ANALYSIS]</scope>
    <source>
        <tissue>Cervix carcinoma</tissue>
        <tissue>Erythroleukemia</tissue>
    </source>
</reference>
<reference key="18">
    <citation type="journal article" date="2014" name="J. Proteomics">
        <title>An enzyme assisted RP-RPLC approach for in-depth analysis of human liver phosphoproteome.</title>
        <authorList>
            <person name="Bian Y."/>
            <person name="Song C."/>
            <person name="Cheng K."/>
            <person name="Dong M."/>
            <person name="Wang F."/>
            <person name="Huang J."/>
            <person name="Sun D."/>
            <person name="Wang L."/>
            <person name="Ye M."/>
            <person name="Zou H."/>
        </authorList>
    </citation>
    <scope>IDENTIFICATION BY MASS SPECTROMETRY [LARGE SCALE ANALYSIS]</scope>
    <source>
        <tissue>Liver</tissue>
    </source>
</reference>
<reference key="19">
    <citation type="journal article" date="2015" name="Biochem. Biophys. Res. Commun.">
        <title>NVL2, a nucleolar AAA-ATPase, is associated with the nuclear exosome and is involved in pre-rRNA processing.</title>
        <authorList>
            <person name="Yoshikatsu Y."/>
            <person name="Ishida Y."/>
            <person name="Sudo H."/>
            <person name="Yuasa K."/>
            <person name="Tsuji A."/>
            <person name="Nagahama M."/>
        </authorList>
    </citation>
    <scope>FUNCTION</scope>
</reference>
<reference key="20">
    <citation type="journal article" date="2015" name="Cell Rep.">
        <title>SUMO-2 orchestrates chromatin modifiers in response to DNA damage.</title>
        <authorList>
            <person name="Hendriks I.A."/>
            <person name="Treffers L.W."/>
            <person name="Verlaan-de Vries M."/>
            <person name="Olsen J.V."/>
            <person name="Vertegaal A.C."/>
        </authorList>
    </citation>
    <scope>SUMOYLATION [LARGE SCALE ANALYSIS] AT LYS-153</scope>
    <scope>IDENTIFICATION BY MASS SPECTROMETRY [LARGE SCALE ANALYSIS]</scope>
</reference>
<reference key="21">
    <citation type="journal article" date="2017" name="Nat. Struct. Mol. Biol.">
        <title>Site-specific mapping of the human SUMO proteome reveals co-modification with phosphorylation.</title>
        <authorList>
            <person name="Hendriks I.A."/>
            <person name="Lyon D."/>
            <person name="Young C."/>
            <person name="Jensen L.J."/>
            <person name="Vertegaal A.C."/>
            <person name="Nielsen M.L."/>
        </authorList>
    </citation>
    <scope>SUMOYLATION [LARGE SCALE ANALYSIS] AT LYS-37; LYS-86; LYS-127 AND LYS-150</scope>
    <scope>IDENTIFICATION BY MASS SPECTROMETRY [LARGE SCALE ANALYSIS]</scope>
</reference>
<reference evidence="10 11" key="22">
    <citation type="journal article" date="2018" name="Cell">
        <title>Helicase-Dependent RNA Decay Illuminated by a Cryo-EM Structure of a Human Nuclear RNA Exosome-MTR4 Complex.</title>
        <authorList>
            <person name="Weick E.M."/>
            <person name="Puno M.R."/>
            <person name="Januszyk K."/>
            <person name="Zinder J.C."/>
            <person name="DiMattia M.A."/>
            <person name="Lima C.D."/>
        </authorList>
    </citation>
    <scope>STRUCTURE BY ELECTRON MICROSCOPY (3.45 ANGSTROMS)</scope>
    <scope>SUBUNIT</scope>
</reference>
<reference evidence="12" key="23">
    <citation type="journal article" date="2018" name="Elife">
        <title>Distinct and evolutionary conserved structural features of the human nuclear exosome complex.</title>
        <authorList>
            <person name="Gerlach P."/>
            <person name="Schuller J.M."/>
            <person name="Bonneau F."/>
            <person name="Basquin J."/>
            <person name="Reichelt P."/>
            <person name="Falk S."/>
            <person name="Conti E."/>
        </authorList>
    </citation>
    <scope>STRUCTURE BY ELECTRON MICROSCOPY (3.80 ANGSTROMS) IN COMPLEX WITH THE RNA EXOSOME COMPLEX</scope>
    <scope>INTERACTION WITH THE RNA EXOSOME COMPLEX</scope>
</reference>
<protein>
    <recommendedName>
        <fullName evidence="8">M-phase phosphoprotein 6</fullName>
    </recommendedName>
</protein>
<accession>Q99547</accession>
<accession>B2RAF0</accession>